<name>DNLJ_BRUMB</name>
<evidence type="ECO:0000255" key="1">
    <source>
        <dbReference type="HAMAP-Rule" id="MF_01588"/>
    </source>
</evidence>
<sequence>MSDISVEKLTELEAAAELERLARAIAHHDELYHAKDRPEISDAAYDALKRRNEAIEAHFPALVRDDSPSRRVGAAPALATFAPVVHARPMLSLDNAFSDEDVRDFVGSVYRFLGQLPDDSIAFTAEPKIDGLSMSIRYENGILVSGATRGDGTTGENVTANIRTIAEIPNRLPAGAPAVVEVRGEVYMAKSDFLTLNAQMAAEGKQTYVNPRNTAAGSLRQLDAKVTASRKLRFFAYAWGEMSDMPADTQLGMVEVFRQWGFPVNPLMKRFNSVDGLLAHYRAIGMERPTLDYDIDGVVYKVDRLDLQTRLGFRSRSPRWAIAHKFPAEQALTILRGIDIQVGRTGALTPVARLEPITVGGVVVTNATLHNEDYIKGIGQKGEPIREGRDIRIGDSVIVQRAGDVIPQIVDVVLEEGKKRGEPYQFPHVCPACGSHAVREEGEAVRRCTGGLICPAQAVERIRHFVSRNAFDIEGLGEKQVEFFFNAEDPALCIRSPADIFTLKKRQENSLTKLQNIEGFGATSVKKLYDAIDARREIALHRFLFGLGIRHVGEVNAKRLARAYLSYAAFEKAALEAVPPKEGDRTDKGSEAWQDMLAVEGIGSIVAEAVVDFYGEPHNREVLAALLAEVTPLDEEARVATGSPVEGKTVVFTGSLERMSRDEAKAMAERHGAKTAGSVSKKTDLVVAGPGAGSKLAKATELGIEVINEDDWFKLVGED</sequence>
<gene>
    <name evidence="1" type="primary">ligA</name>
    <name type="ordered locus">BMEA_A1468</name>
</gene>
<organism>
    <name type="scientific">Brucella melitensis biotype 2 (strain ATCC 23457)</name>
    <dbReference type="NCBI Taxonomy" id="546272"/>
    <lineage>
        <taxon>Bacteria</taxon>
        <taxon>Pseudomonadati</taxon>
        <taxon>Pseudomonadota</taxon>
        <taxon>Alphaproteobacteria</taxon>
        <taxon>Hyphomicrobiales</taxon>
        <taxon>Brucellaceae</taxon>
        <taxon>Brucella/Ochrobactrum group</taxon>
        <taxon>Brucella</taxon>
    </lineage>
</organism>
<accession>C0RE59</accession>
<protein>
    <recommendedName>
        <fullName evidence="1">DNA ligase</fullName>
        <ecNumber evidence="1">6.5.1.2</ecNumber>
    </recommendedName>
    <alternativeName>
        <fullName evidence="1">Polydeoxyribonucleotide synthase [NAD(+)]</fullName>
    </alternativeName>
</protein>
<keyword id="KW-0227">DNA damage</keyword>
<keyword id="KW-0234">DNA repair</keyword>
<keyword id="KW-0235">DNA replication</keyword>
<keyword id="KW-0436">Ligase</keyword>
<keyword id="KW-0460">Magnesium</keyword>
<keyword id="KW-0464">Manganese</keyword>
<keyword id="KW-0479">Metal-binding</keyword>
<keyword id="KW-0520">NAD</keyword>
<keyword id="KW-0862">Zinc</keyword>
<proteinExistence type="inferred from homology"/>
<feature type="chain" id="PRO_0000380319" description="DNA ligase">
    <location>
        <begin position="1"/>
        <end position="719"/>
    </location>
</feature>
<feature type="domain" description="BRCT" evidence="1">
    <location>
        <begin position="640"/>
        <end position="719"/>
    </location>
</feature>
<feature type="active site" description="N6-AMP-lysine intermediate" evidence="1">
    <location>
        <position position="128"/>
    </location>
</feature>
<feature type="binding site" evidence="1">
    <location>
        <begin position="42"/>
        <end position="46"/>
    </location>
    <ligand>
        <name>NAD(+)</name>
        <dbReference type="ChEBI" id="CHEBI:57540"/>
    </ligand>
</feature>
<feature type="binding site" evidence="1">
    <location>
        <begin position="92"/>
        <end position="93"/>
    </location>
    <ligand>
        <name>NAD(+)</name>
        <dbReference type="ChEBI" id="CHEBI:57540"/>
    </ligand>
</feature>
<feature type="binding site" evidence="1">
    <location>
        <position position="126"/>
    </location>
    <ligand>
        <name>NAD(+)</name>
        <dbReference type="ChEBI" id="CHEBI:57540"/>
    </ligand>
</feature>
<feature type="binding site" evidence="1">
    <location>
        <position position="149"/>
    </location>
    <ligand>
        <name>NAD(+)</name>
        <dbReference type="ChEBI" id="CHEBI:57540"/>
    </ligand>
</feature>
<feature type="binding site" evidence="1">
    <location>
        <position position="185"/>
    </location>
    <ligand>
        <name>NAD(+)</name>
        <dbReference type="ChEBI" id="CHEBI:57540"/>
    </ligand>
</feature>
<feature type="binding site" evidence="1">
    <location>
        <position position="301"/>
    </location>
    <ligand>
        <name>NAD(+)</name>
        <dbReference type="ChEBI" id="CHEBI:57540"/>
    </ligand>
</feature>
<feature type="binding site" evidence="1">
    <location>
        <position position="325"/>
    </location>
    <ligand>
        <name>NAD(+)</name>
        <dbReference type="ChEBI" id="CHEBI:57540"/>
    </ligand>
</feature>
<feature type="binding site" evidence="1">
    <location>
        <position position="430"/>
    </location>
    <ligand>
        <name>Zn(2+)</name>
        <dbReference type="ChEBI" id="CHEBI:29105"/>
    </ligand>
</feature>
<feature type="binding site" evidence="1">
    <location>
        <position position="433"/>
    </location>
    <ligand>
        <name>Zn(2+)</name>
        <dbReference type="ChEBI" id="CHEBI:29105"/>
    </ligand>
</feature>
<feature type="binding site" evidence="1">
    <location>
        <position position="448"/>
    </location>
    <ligand>
        <name>Zn(2+)</name>
        <dbReference type="ChEBI" id="CHEBI:29105"/>
    </ligand>
</feature>
<feature type="binding site" evidence="1">
    <location>
        <position position="454"/>
    </location>
    <ligand>
        <name>Zn(2+)</name>
        <dbReference type="ChEBI" id="CHEBI:29105"/>
    </ligand>
</feature>
<dbReference type="EC" id="6.5.1.2" evidence="1"/>
<dbReference type="EMBL" id="CP001488">
    <property type="protein sequence ID" value="ACO01181.1"/>
    <property type="molecule type" value="Genomic_DNA"/>
</dbReference>
<dbReference type="RefSeq" id="WP_004686368.1">
    <property type="nucleotide sequence ID" value="NC_012441.1"/>
</dbReference>
<dbReference type="SMR" id="C0RE59"/>
<dbReference type="KEGG" id="bmi:BMEA_A1468"/>
<dbReference type="HOGENOM" id="CLU_007764_2_0_5"/>
<dbReference type="Proteomes" id="UP000001748">
    <property type="component" value="Chromosome I"/>
</dbReference>
<dbReference type="GO" id="GO:0005829">
    <property type="term" value="C:cytosol"/>
    <property type="evidence" value="ECO:0007669"/>
    <property type="project" value="TreeGrafter"/>
</dbReference>
<dbReference type="GO" id="GO:0003911">
    <property type="term" value="F:DNA ligase (NAD+) activity"/>
    <property type="evidence" value="ECO:0007669"/>
    <property type="project" value="UniProtKB-UniRule"/>
</dbReference>
<dbReference type="GO" id="GO:0046872">
    <property type="term" value="F:metal ion binding"/>
    <property type="evidence" value="ECO:0007669"/>
    <property type="project" value="UniProtKB-KW"/>
</dbReference>
<dbReference type="GO" id="GO:0006281">
    <property type="term" value="P:DNA repair"/>
    <property type="evidence" value="ECO:0007669"/>
    <property type="project" value="UniProtKB-KW"/>
</dbReference>
<dbReference type="GO" id="GO:0006260">
    <property type="term" value="P:DNA replication"/>
    <property type="evidence" value="ECO:0007669"/>
    <property type="project" value="UniProtKB-KW"/>
</dbReference>
<dbReference type="CDD" id="cd17748">
    <property type="entry name" value="BRCT_DNA_ligase_like"/>
    <property type="match status" value="1"/>
</dbReference>
<dbReference type="CDD" id="cd00114">
    <property type="entry name" value="LIGANc"/>
    <property type="match status" value="1"/>
</dbReference>
<dbReference type="FunFam" id="3.30.470.30:FF:000001">
    <property type="entry name" value="DNA ligase"/>
    <property type="match status" value="1"/>
</dbReference>
<dbReference type="Gene3D" id="6.20.10.30">
    <property type="match status" value="1"/>
</dbReference>
<dbReference type="Gene3D" id="1.10.150.20">
    <property type="entry name" value="5' to 3' exonuclease, C-terminal subdomain"/>
    <property type="match status" value="2"/>
</dbReference>
<dbReference type="Gene3D" id="3.40.50.10190">
    <property type="entry name" value="BRCT domain"/>
    <property type="match status" value="1"/>
</dbReference>
<dbReference type="Gene3D" id="3.30.470.30">
    <property type="entry name" value="DNA ligase/mRNA capping enzyme"/>
    <property type="match status" value="1"/>
</dbReference>
<dbReference type="Gene3D" id="1.10.287.610">
    <property type="entry name" value="Helix hairpin bin"/>
    <property type="match status" value="1"/>
</dbReference>
<dbReference type="Gene3D" id="2.40.50.140">
    <property type="entry name" value="Nucleic acid-binding proteins"/>
    <property type="match status" value="1"/>
</dbReference>
<dbReference type="HAMAP" id="MF_01588">
    <property type="entry name" value="DNA_ligase_A"/>
    <property type="match status" value="1"/>
</dbReference>
<dbReference type="InterPro" id="IPR001357">
    <property type="entry name" value="BRCT_dom"/>
</dbReference>
<dbReference type="InterPro" id="IPR036420">
    <property type="entry name" value="BRCT_dom_sf"/>
</dbReference>
<dbReference type="InterPro" id="IPR041663">
    <property type="entry name" value="DisA/LigA_HHH"/>
</dbReference>
<dbReference type="InterPro" id="IPR001679">
    <property type="entry name" value="DNA_ligase"/>
</dbReference>
<dbReference type="InterPro" id="IPR018239">
    <property type="entry name" value="DNA_ligase_AS"/>
</dbReference>
<dbReference type="InterPro" id="IPR033136">
    <property type="entry name" value="DNA_ligase_CS"/>
</dbReference>
<dbReference type="InterPro" id="IPR013839">
    <property type="entry name" value="DNAligase_adenylation"/>
</dbReference>
<dbReference type="InterPro" id="IPR013840">
    <property type="entry name" value="DNAligase_N"/>
</dbReference>
<dbReference type="InterPro" id="IPR012340">
    <property type="entry name" value="NA-bd_OB-fold"/>
</dbReference>
<dbReference type="InterPro" id="IPR004150">
    <property type="entry name" value="NAD_DNA_ligase_OB"/>
</dbReference>
<dbReference type="InterPro" id="IPR010994">
    <property type="entry name" value="RuvA_2-like"/>
</dbReference>
<dbReference type="InterPro" id="IPR004149">
    <property type="entry name" value="Znf_DNAligase_C4"/>
</dbReference>
<dbReference type="NCBIfam" id="TIGR00575">
    <property type="entry name" value="dnlj"/>
    <property type="match status" value="1"/>
</dbReference>
<dbReference type="NCBIfam" id="NF005932">
    <property type="entry name" value="PRK07956.1"/>
    <property type="match status" value="1"/>
</dbReference>
<dbReference type="PANTHER" id="PTHR23389">
    <property type="entry name" value="CHROMOSOME TRANSMISSION FIDELITY FACTOR 18"/>
    <property type="match status" value="1"/>
</dbReference>
<dbReference type="PANTHER" id="PTHR23389:SF9">
    <property type="entry name" value="DNA LIGASE"/>
    <property type="match status" value="1"/>
</dbReference>
<dbReference type="Pfam" id="PF00533">
    <property type="entry name" value="BRCT"/>
    <property type="match status" value="1"/>
</dbReference>
<dbReference type="Pfam" id="PF01653">
    <property type="entry name" value="DNA_ligase_aden"/>
    <property type="match status" value="1"/>
</dbReference>
<dbReference type="Pfam" id="PF03120">
    <property type="entry name" value="DNA_ligase_OB"/>
    <property type="match status" value="1"/>
</dbReference>
<dbReference type="Pfam" id="PF03119">
    <property type="entry name" value="DNA_ligase_ZBD"/>
    <property type="match status" value="1"/>
</dbReference>
<dbReference type="Pfam" id="PF12826">
    <property type="entry name" value="HHH_2"/>
    <property type="match status" value="1"/>
</dbReference>
<dbReference type="PIRSF" id="PIRSF001604">
    <property type="entry name" value="LigA"/>
    <property type="match status" value="1"/>
</dbReference>
<dbReference type="SMART" id="SM00292">
    <property type="entry name" value="BRCT"/>
    <property type="match status" value="1"/>
</dbReference>
<dbReference type="SMART" id="SM00532">
    <property type="entry name" value="LIGANc"/>
    <property type="match status" value="1"/>
</dbReference>
<dbReference type="SUPFAM" id="SSF52113">
    <property type="entry name" value="BRCT domain"/>
    <property type="match status" value="1"/>
</dbReference>
<dbReference type="SUPFAM" id="SSF56091">
    <property type="entry name" value="DNA ligase/mRNA capping enzyme, catalytic domain"/>
    <property type="match status" value="1"/>
</dbReference>
<dbReference type="SUPFAM" id="SSF50249">
    <property type="entry name" value="Nucleic acid-binding proteins"/>
    <property type="match status" value="1"/>
</dbReference>
<dbReference type="SUPFAM" id="SSF47781">
    <property type="entry name" value="RuvA domain 2-like"/>
    <property type="match status" value="1"/>
</dbReference>
<dbReference type="PROSITE" id="PS50172">
    <property type="entry name" value="BRCT"/>
    <property type="match status" value="1"/>
</dbReference>
<dbReference type="PROSITE" id="PS01055">
    <property type="entry name" value="DNA_LIGASE_N1"/>
    <property type="match status" value="1"/>
</dbReference>
<dbReference type="PROSITE" id="PS01056">
    <property type="entry name" value="DNA_LIGASE_N2"/>
    <property type="match status" value="1"/>
</dbReference>
<reference key="1">
    <citation type="submission" date="2009-03" db="EMBL/GenBank/DDBJ databases">
        <title>Brucella melitensis ATCC 23457 whole genome shotgun sequencing project.</title>
        <authorList>
            <person name="Setubal J.C."/>
            <person name="Boyle S."/>
            <person name="Crasta O.R."/>
            <person name="Gillespie J.J."/>
            <person name="Kenyon R.W."/>
            <person name="Lu J."/>
            <person name="Mane S."/>
            <person name="Nagrani S."/>
            <person name="Shallom J.M."/>
            <person name="Shallom S."/>
            <person name="Shukla M."/>
            <person name="Snyder E.E."/>
            <person name="Sobral B.W."/>
            <person name="Wattam A.R."/>
            <person name="Will R."/>
            <person name="Williams K."/>
            <person name="Yoo H."/>
            <person name="Munk C."/>
            <person name="Tapia R."/>
            <person name="Han C."/>
            <person name="Detter J.C."/>
            <person name="Bruce D."/>
            <person name="Brettin T.S."/>
        </authorList>
    </citation>
    <scope>NUCLEOTIDE SEQUENCE [LARGE SCALE GENOMIC DNA]</scope>
    <source>
        <strain>ATCC 23457</strain>
    </source>
</reference>
<comment type="function">
    <text evidence="1">DNA ligase that catalyzes the formation of phosphodiester linkages between 5'-phosphoryl and 3'-hydroxyl groups in double-stranded DNA using NAD as a coenzyme and as the energy source for the reaction. It is essential for DNA replication and repair of damaged DNA.</text>
</comment>
<comment type="catalytic activity">
    <reaction evidence="1">
        <text>NAD(+) + (deoxyribonucleotide)n-3'-hydroxyl + 5'-phospho-(deoxyribonucleotide)m = (deoxyribonucleotide)n+m + AMP + beta-nicotinamide D-nucleotide.</text>
        <dbReference type="EC" id="6.5.1.2"/>
    </reaction>
</comment>
<comment type="cofactor">
    <cofactor evidence="1">
        <name>Mg(2+)</name>
        <dbReference type="ChEBI" id="CHEBI:18420"/>
    </cofactor>
    <cofactor evidence="1">
        <name>Mn(2+)</name>
        <dbReference type="ChEBI" id="CHEBI:29035"/>
    </cofactor>
</comment>
<comment type="similarity">
    <text evidence="1">Belongs to the NAD-dependent DNA ligase family. LigA subfamily.</text>
</comment>